<keyword id="KW-0963">Cytoplasm</keyword>
<keyword id="KW-0521">NADP</keyword>
<keyword id="KW-0560">Oxidoreductase</keyword>
<keyword id="KW-0671">Queuosine biosynthesis</keyword>
<protein>
    <recommendedName>
        <fullName evidence="1">NADPH-dependent 7-cyano-7-deazaguanine reductase</fullName>
        <ecNumber evidence="1">1.7.1.13</ecNumber>
    </recommendedName>
    <alternativeName>
        <fullName evidence="1">7-cyano-7-carbaguanine reductase</fullName>
    </alternativeName>
    <alternativeName>
        <fullName evidence="1">NADPH-dependent nitrile oxidoreductase</fullName>
    </alternativeName>
    <alternativeName>
        <fullName evidence="1">PreQ(0) reductase</fullName>
    </alternativeName>
</protein>
<gene>
    <name evidence="1" type="primary">queF</name>
    <name type="ordered locus">SPA2832</name>
</gene>
<proteinExistence type="inferred from homology"/>
<sequence length="282" mass="32657">MSSYENHQALDGLTLGKSTDYRDNYDVSLLQGVPRSLNRDPLGLTADNLPFHGADIWTLYELSWLNSQGLPQVAVGHVELDYTSVNLIESKSFKLYLNSFNQTRFDTWETVRQTLERDLRACAQGNVSVRLHRLDELEGQPVAHFHGACIDDQDISIDNYQFTTDYLQHAVSGEKQVEETLVSHLLKSNCLITHQPDWGSIQIQYRGRKIDREKLLRYLVSFRHHNEFHEQCVERIFNDILRFCQPETLSIYARYTRRGGLDINPWRSNTDFVPATGRLARQ</sequence>
<comment type="function">
    <text evidence="1">Catalyzes the NADPH-dependent reduction of 7-cyano-7-deazaguanine (preQ0) to 7-aminomethyl-7-deazaguanine (preQ1).</text>
</comment>
<comment type="catalytic activity">
    <reaction evidence="1">
        <text>7-aminomethyl-7-carbaguanine + 2 NADP(+) = 7-cyano-7-deazaguanine + 2 NADPH + 3 H(+)</text>
        <dbReference type="Rhea" id="RHEA:13409"/>
        <dbReference type="ChEBI" id="CHEBI:15378"/>
        <dbReference type="ChEBI" id="CHEBI:45075"/>
        <dbReference type="ChEBI" id="CHEBI:57783"/>
        <dbReference type="ChEBI" id="CHEBI:58349"/>
        <dbReference type="ChEBI" id="CHEBI:58703"/>
        <dbReference type="EC" id="1.7.1.13"/>
    </reaction>
</comment>
<comment type="pathway">
    <text evidence="1">tRNA modification; tRNA-queuosine biosynthesis.</text>
</comment>
<comment type="subunit">
    <text evidence="1">Homodimer.</text>
</comment>
<comment type="subcellular location">
    <subcellularLocation>
        <location evidence="1">Cytoplasm</location>
    </subcellularLocation>
</comment>
<comment type="similarity">
    <text evidence="1">Belongs to the GTP cyclohydrolase I family. QueF type 2 subfamily.</text>
</comment>
<reference key="1">
    <citation type="journal article" date="2004" name="Nat. Genet.">
        <title>Comparison of genome degradation in Paratyphi A and Typhi, human-restricted serovars of Salmonella enterica that cause typhoid.</title>
        <authorList>
            <person name="McClelland M."/>
            <person name="Sanderson K.E."/>
            <person name="Clifton S.W."/>
            <person name="Latreille P."/>
            <person name="Porwollik S."/>
            <person name="Sabo A."/>
            <person name="Meyer R."/>
            <person name="Bieri T."/>
            <person name="Ozersky P."/>
            <person name="McLellan M."/>
            <person name="Harkins C.R."/>
            <person name="Wang C."/>
            <person name="Nguyen C."/>
            <person name="Berghoff A."/>
            <person name="Elliott G."/>
            <person name="Kohlberg S."/>
            <person name="Strong C."/>
            <person name="Du F."/>
            <person name="Carter J."/>
            <person name="Kremizki C."/>
            <person name="Layman D."/>
            <person name="Leonard S."/>
            <person name="Sun H."/>
            <person name="Fulton L."/>
            <person name="Nash W."/>
            <person name="Miner T."/>
            <person name="Minx P."/>
            <person name="Delehaunty K."/>
            <person name="Fronick C."/>
            <person name="Magrini V."/>
            <person name="Nhan M."/>
            <person name="Warren W."/>
            <person name="Florea L."/>
            <person name="Spieth J."/>
            <person name="Wilson R.K."/>
        </authorList>
    </citation>
    <scope>NUCLEOTIDE SEQUENCE [LARGE SCALE GENOMIC DNA]</scope>
    <source>
        <strain>ATCC 9150 / SARB42</strain>
    </source>
</reference>
<dbReference type="EC" id="1.7.1.13" evidence="1"/>
<dbReference type="EMBL" id="CP000026">
    <property type="protein sequence ID" value="AAV78680.1"/>
    <property type="molecule type" value="Genomic_DNA"/>
</dbReference>
<dbReference type="RefSeq" id="WP_000100472.1">
    <property type="nucleotide sequence ID" value="NC_006511.1"/>
</dbReference>
<dbReference type="SMR" id="Q5PEK0"/>
<dbReference type="KEGG" id="spt:SPA2832"/>
<dbReference type="HOGENOM" id="CLU_054738_0_0_6"/>
<dbReference type="UniPathway" id="UPA00392"/>
<dbReference type="Proteomes" id="UP000008185">
    <property type="component" value="Chromosome"/>
</dbReference>
<dbReference type="GO" id="GO:0005737">
    <property type="term" value="C:cytoplasm"/>
    <property type="evidence" value="ECO:0007669"/>
    <property type="project" value="UniProtKB-SubCell"/>
</dbReference>
<dbReference type="GO" id="GO:0033739">
    <property type="term" value="F:preQ1 synthase activity"/>
    <property type="evidence" value="ECO:0007669"/>
    <property type="project" value="UniProtKB-UniRule"/>
</dbReference>
<dbReference type="GO" id="GO:0008616">
    <property type="term" value="P:queuosine biosynthetic process"/>
    <property type="evidence" value="ECO:0007669"/>
    <property type="project" value="UniProtKB-UniRule"/>
</dbReference>
<dbReference type="GO" id="GO:0006400">
    <property type="term" value="P:tRNA modification"/>
    <property type="evidence" value="ECO:0007669"/>
    <property type="project" value="UniProtKB-UniRule"/>
</dbReference>
<dbReference type="FunFam" id="3.30.1130.10:FF:000004">
    <property type="entry name" value="NADPH-dependent 7-cyano-7-deazaguanine reductase"/>
    <property type="match status" value="1"/>
</dbReference>
<dbReference type="Gene3D" id="3.30.1130.10">
    <property type="match status" value="2"/>
</dbReference>
<dbReference type="HAMAP" id="MF_00817">
    <property type="entry name" value="QueF_type2"/>
    <property type="match status" value="1"/>
</dbReference>
<dbReference type="InterPro" id="IPR043133">
    <property type="entry name" value="GTP-CH-I_C/QueF"/>
</dbReference>
<dbReference type="InterPro" id="IPR050084">
    <property type="entry name" value="NADPH_dep_7-cyano-7-deazaG_red"/>
</dbReference>
<dbReference type="InterPro" id="IPR029500">
    <property type="entry name" value="QueF"/>
</dbReference>
<dbReference type="InterPro" id="IPR029139">
    <property type="entry name" value="QueF_N"/>
</dbReference>
<dbReference type="InterPro" id="IPR016428">
    <property type="entry name" value="QueF_type2"/>
</dbReference>
<dbReference type="NCBIfam" id="TIGR03138">
    <property type="entry name" value="QueF"/>
    <property type="match status" value="1"/>
</dbReference>
<dbReference type="PANTHER" id="PTHR34354">
    <property type="entry name" value="NADPH-DEPENDENT 7-CYANO-7-DEAZAGUANINE REDUCTASE"/>
    <property type="match status" value="1"/>
</dbReference>
<dbReference type="PANTHER" id="PTHR34354:SF1">
    <property type="entry name" value="NADPH-DEPENDENT 7-CYANO-7-DEAZAGUANINE REDUCTASE"/>
    <property type="match status" value="1"/>
</dbReference>
<dbReference type="Pfam" id="PF14489">
    <property type="entry name" value="QueF"/>
    <property type="match status" value="1"/>
</dbReference>
<dbReference type="Pfam" id="PF14819">
    <property type="entry name" value="QueF_N"/>
    <property type="match status" value="1"/>
</dbReference>
<dbReference type="PIRSF" id="PIRSF004750">
    <property type="entry name" value="Nitrile_oxidored_YqcD_prd"/>
    <property type="match status" value="1"/>
</dbReference>
<dbReference type="SUPFAM" id="SSF55620">
    <property type="entry name" value="Tetrahydrobiopterin biosynthesis enzymes-like"/>
    <property type="match status" value="1"/>
</dbReference>
<accession>Q5PEK0</accession>
<evidence type="ECO:0000255" key="1">
    <source>
        <dbReference type="HAMAP-Rule" id="MF_00817"/>
    </source>
</evidence>
<organism>
    <name type="scientific">Salmonella paratyphi A (strain ATCC 9150 / SARB42)</name>
    <dbReference type="NCBI Taxonomy" id="295319"/>
    <lineage>
        <taxon>Bacteria</taxon>
        <taxon>Pseudomonadati</taxon>
        <taxon>Pseudomonadota</taxon>
        <taxon>Gammaproteobacteria</taxon>
        <taxon>Enterobacterales</taxon>
        <taxon>Enterobacteriaceae</taxon>
        <taxon>Salmonella</taxon>
    </lineage>
</organism>
<name>QUEF_SALPA</name>
<feature type="chain" id="PRO_0000163057" description="NADPH-dependent 7-cyano-7-deazaguanine reductase">
    <location>
        <begin position="1"/>
        <end position="282"/>
    </location>
</feature>
<feature type="active site" description="Thioimide intermediate" evidence="1">
    <location>
        <position position="190"/>
    </location>
</feature>
<feature type="active site" description="Proton donor" evidence="1">
    <location>
        <position position="197"/>
    </location>
</feature>
<feature type="binding site" evidence="1">
    <location>
        <begin position="88"/>
        <end position="90"/>
    </location>
    <ligand>
        <name>substrate</name>
    </ligand>
</feature>
<feature type="binding site" evidence="1">
    <location>
        <begin position="90"/>
        <end position="91"/>
    </location>
    <ligand>
        <name>NADPH</name>
        <dbReference type="ChEBI" id="CHEBI:57783"/>
    </ligand>
</feature>
<feature type="binding site" evidence="1">
    <location>
        <begin position="229"/>
        <end position="230"/>
    </location>
    <ligand>
        <name>substrate</name>
    </ligand>
</feature>
<feature type="binding site" evidence="1">
    <location>
        <begin position="258"/>
        <end position="259"/>
    </location>
    <ligand>
        <name>NADPH</name>
        <dbReference type="ChEBI" id="CHEBI:57783"/>
    </ligand>
</feature>